<dbReference type="EMBL" id="AM260525">
    <property type="protein sequence ID" value="CAK01677.1"/>
    <property type="molecule type" value="Genomic_DNA"/>
</dbReference>
<dbReference type="RefSeq" id="WP_012231859.1">
    <property type="nucleotide sequence ID" value="NC_010161.1"/>
</dbReference>
<dbReference type="SMR" id="A9IVB9"/>
<dbReference type="KEGG" id="btr:BT_1313"/>
<dbReference type="eggNOG" id="COG0781">
    <property type="taxonomic scope" value="Bacteria"/>
</dbReference>
<dbReference type="HOGENOM" id="CLU_087843_4_0_5"/>
<dbReference type="Proteomes" id="UP000001592">
    <property type="component" value="Chromosome"/>
</dbReference>
<dbReference type="GO" id="GO:0005829">
    <property type="term" value="C:cytosol"/>
    <property type="evidence" value="ECO:0007669"/>
    <property type="project" value="TreeGrafter"/>
</dbReference>
<dbReference type="GO" id="GO:0003723">
    <property type="term" value="F:RNA binding"/>
    <property type="evidence" value="ECO:0007669"/>
    <property type="project" value="UniProtKB-UniRule"/>
</dbReference>
<dbReference type="GO" id="GO:0006353">
    <property type="term" value="P:DNA-templated transcription termination"/>
    <property type="evidence" value="ECO:0007669"/>
    <property type="project" value="UniProtKB-UniRule"/>
</dbReference>
<dbReference type="GO" id="GO:0031564">
    <property type="term" value="P:transcription antitermination"/>
    <property type="evidence" value="ECO:0007669"/>
    <property type="project" value="UniProtKB-KW"/>
</dbReference>
<dbReference type="Gene3D" id="1.10.940.10">
    <property type="entry name" value="NusB-like"/>
    <property type="match status" value="1"/>
</dbReference>
<dbReference type="HAMAP" id="MF_00073">
    <property type="entry name" value="NusB"/>
    <property type="match status" value="1"/>
</dbReference>
<dbReference type="InterPro" id="IPR035926">
    <property type="entry name" value="NusB-like_sf"/>
</dbReference>
<dbReference type="InterPro" id="IPR011605">
    <property type="entry name" value="NusB_fam"/>
</dbReference>
<dbReference type="InterPro" id="IPR006027">
    <property type="entry name" value="NusB_RsmB_TIM44"/>
</dbReference>
<dbReference type="NCBIfam" id="TIGR01951">
    <property type="entry name" value="nusB"/>
    <property type="match status" value="1"/>
</dbReference>
<dbReference type="PANTHER" id="PTHR11078:SF3">
    <property type="entry name" value="ANTITERMINATION NUSB DOMAIN-CONTAINING PROTEIN"/>
    <property type="match status" value="1"/>
</dbReference>
<dbReference type="PANTHER" id="PTHR11078">
    <property type="entry name" value="N UTILIZATION SUBSTANCE PROTEIN B-RELATED"/>
    <property type="match status" value="1"/>
</dbReference>
<dbReference type="Pfam" id="PF01029">
    <property type="entry name" value="NusB"/>
    <property type="match status" value="1"/>
</dbReference>
<dbReference type="SUPFAM" id="SSF48013">
    <property type="entry name" value="NusB-like"/>
    <property type="match status" value="1"/>
</dbReference>
<evidence type="ECO:0000255" key="1">
    <source>
        <dbReference type="HAMAP-Rule" id="MF_00073"/>
    </source>
</evidence>
<organism>
    <name type="scientific">Bartonella tribocorum (strain CIP 105476 / IBS 506)</name>
    <dbReference type="NCBI Taxonomy" id="382640"/>
    <lineage>
        <taxon>Bacteria</taxon>
        <taxon>Pseudomonadati</taxon>
        <taxon>Pseudomonadota</taxon>
        <taxon>Alphaproteobacteria</taxon>
        <taxon>Hyphomicrobiales</taxon>
        <taxon>Bartonellaceae</taxon>
        <taxon>Bartonella</taxon>
    </lineage>
</organism>
<feature type="chain" id="PRO_1000075177" description="Transcription antitermination protein NusB">
    <location>
        <begin position="1"/>
        <end position="156"/>
    </location>
</feature>
<reference key="1">
    <citation type="journal article" date="2007" name="Nat. Genet.">
        <title>Genomic analysis of Bartonella identifies type IV secretion systems as host adaptability factors.</title>
        <authorList>
            <person name="Saenz H.L."/>
            <person name="Engel P."/>
            <person name="Stoeckli M.C."/>
            <person name="Lanz C."/>
            <person name="Raddatz G."/>
            <person name="Vayssier-Taussat M."/>
            <person name="Birtles R."/>
            <person name="Schuster S.C."/>
            <person name="Dehio C."/>
        </authorList>
    </citation>
    <scope>NUCLEOTIDE SEQUENCE [LARGE SCALE GENOMIC DNA]</scope>
    <source>
        <strain>CIP 105476 / IBS 506</strain>
    </source>
</reference>
<proteinExistence type="inferred from homology"/>
<keyword id="KW-0694">RNA-binding</keyword>
<keyword id="KW-0804">Transcription</keyword>
<keyword id="KW-0889">Transcription antitermination</keyword>
<keyword id="KW-0805">Transcription regulation</keyword>
<accession>A9IVB9</accession>
<comment type="function">
    <text evidence="1">Involved in transcription antitermination. Required for transcription of ribosomal RNA (rRNA) genes. Binds specifically to the boxA antiterminator sequence of the ribosomal RNA (rrn) operons.</text>
</comment>
<comment type="similarity">
    <text evidence="1">Belongs to the NusB family.</text>
</comment>
<sequence length="156" mass="17533">MADIKSRHFPRSANKRGAARLAAVQALYQMDIVGSGVMETAAEYEAYRLGKDIDGDQYLDADFQWFLAIITGVVQDQKQLDPLLHQQLSAEWSLSRLDSILRAILRAALWELINRKDVPVAVVVNEYVDIAKAFFEGDEPKLVNAVLDSMAKKIRL</sequence>
<protein>
    <recommendedName>
        <fullName evidence="1">Transcription antitermination protein NusB</fullName>
    </recommendedName>
    <alternativeName>
        <fullName evidence="1">Antitermination factor NusB</fullName>
    </alternativeName>
</protein>
<gene>
    <name evidence="1" type="primary">nusB</name>
    <name type="ordered locus">BT_1313</name>
</gene>
<name>NUSB_BART1</name>